<comment type="catalytic activity">
    <reaction>
        <text>L-seryl-[protein] + ATP = O-phospho-L-seryl-[protein] + ADP + H(+)</text>
        <dbReference type="Rhea" id="RHEA:17989"/>
        <dbReference type="Rhea" id="RHEA-COMP:9863"/>
        <dbReference type="Rhea" id="RHEA-COMP:11604"/>
        <dbReference type="ChEBI" id="CHEBI:15378"/>
        <dbReference type="ChEBI" id="CHEBI:29999"/>
        <dbReference type="ChEBI" id="CHEBI:30616"/>
        <dbReference type="ChEBI" id="CHEBI:83421"/>
        <dbReference type="ChEBI" id="CHEBI:456216"/>
        <dbReference type="EC" id="2.7.11.1"/>
    </reaction>
</comment>
<comment type="catalytic activity">
    <reaction>
        <text>L-threonyl-[protein] + ATP = O-phospho-L-threonyl-[protein] + ADP + H(+)</text>
        <dbReference type="Rhea" id="RHEA:46608"/>
        <dbReference type="Rhea" id="RHEA-COMP:11060"/>
        <dbReference type="Rhea" id="RHEA-COMP:11605"/>
        <dbReference type="ChEBI" id="CHEBI:15378"/>
        <dbReference type="ChEBI" id="CHEBI:30013"/>
        <dbReference type="ChEBI" id="CHEBI:30616"/>
        <dbReference type="ChEBI" id="CHEBI:61977"/>
        <dbReference type="ChEBI" id="CHEBI:456216"/>
        <dbReference type="EC" id="2.7.11.1"/>
    </reaction>
</comment>
<comment type="subcellular location">
    <subcellularLocation>
        <location evidence="5">Cell membrane</location>
        <topology evidence="5">Single-pass type I membrane protein</topology>
    </subcellularLocation>
</comment>
<comment type="tissue specificity">
    <text evidence="6 7">Expressed in the whole plant at low levels.</text>
</comment>
<comment type="similarity">
    <text evidence="2">Belongs to the protein kinase superfamily. Ser/Thr protein kinase family.</text>
</comment>
<organism>
    <name type="scientific">Arabidopsis thaliana</name>
    <name type="common">Mouse-ear cress</name>
    <dbReference type="NCBI Taxonomy" id="3702"/>
    <lineage>
        <taxon>Eukaryota</taxon>
        <taxon>Viridiplantae</taxon>
        <taxon>Streptophyta</taxon>
        <taxon>Embryophyta</taxon>
        <taxon>Tracheophyta</taxon>
        <taxon>Spermatophyta</taxon>
        <taxon>Magnoliopsida</taxon>
        <taxon>eudicotyledons</taxon>
        <taxon>Gunneridae</taxon>
        <taxon>Pentapetalae</taxon>
        <taxon>rosids</taxon>
        <taxon>malvids</taxon>
        <taxon>Brassicales</taxon>
        <taxon>Brassicaceae</taxon>
        <taxon>Camelineae</taxon>
        <taxon>Arabidopsis</taxon>
    </lineage>
</organism>
<dbReference type="EC" id="2.7.11.1"/>
<dbReference type="EMBL" id="Z84202">
    <property type="protein sequence ID" value="CAB06335.1"/>
    <property type="molecule type" value="Genomic_DNA"/>
</dbReference>
<dbReference type="EMBL" id="AF024650">
    <property type="protein sequence ID" value="AAC50045.1"/>
    <property type="molecule type" value="mRNA"/>
</dbReference>
<dbReference type="EMBL" id="AC006072">
    <property type="protein sequence ID" value="AAD13705.1"/>
    <property type="molecule type" value="Genomic_DNA"/>
</dbReference>
<dbReference type="EMBL" id="CP002685">
    <property type="protein sequence ID" value="AEC10923.1"/>
    <property type="molecule type" value="Genomic_DNA"/>
</dbReference>
<dbReference type="EMBL" id="AY037237">
    <property type="protein sequence ID" value="AAK59837.1"/>
    <property type="molecule type" value="mRNA"/>
</dbReference>
<dbReference type="EMBL" id="BT000518">
    <property type="protein sequence ID" value="AAN18087.1"/>
    <property type="molecule type" value="mRNA"/>
</dbReference>
<dbReference type="PIR" id="C84922">
    <property type="entry name" value="C84922"/>
</dbReference>
<dbReference type="RefSeq" id="NP_182322.1">
    <property type="nucleotide sequence ID" value="NM_130368.4"/>
</dbReference>
<dbReference type="SMR" id="P93050"/>
<dbReference type="BioGRID" id="4748">
    <property type="interactions" value="6"/>
</dbReference>
<dbReference type="FunCoup" id="P93050">
    <property type="interactions" value="267"/>
</dbReference>
<dbReference type="IntAct" id="P93050">
    <property type="interactions" value="7"/>
</dbReference>
<dbReference type="STRING" id="3702.P93050"/>
<dbReference type="GlyCosmos" id="P93050">
    <property type="glycosylation" value="4 sites, No reported glycans"/>
</dbReference>
<dbReference type="GlyGen" id="P93050">
    <property type="glycosylation" value="4 sites"/>
</dbReference>
<dbReference type="iPTMnet" id="P93050"/>
<dbReference type="SwissPalm" id="P93050"/>
<dbReference type="PaxDb" id="3702-AT2G48010.1"/>
<dbReference type="ProteomicsDB" id="234716"/>
<dbReference type="EnsemblPlants" id="AT2G48010.1">
    <property type="protein sequence ID" value="AT2G48010.1"/>
    <property type="gene ID" value="AT2G48010"/>
</dbReference>
<dbReference type="GeneID" id="819413"/>
<dbReference type="Gramene" id="AT2G48010.1">
    <property type="protein sequence ID" value="AT2G48010.1"/>
    <property type="gene ID" value="AT2G48010"/>
</dbReference>
<dbReference type="KEGG" id="ath:AT2G48010"/>
<dbReference type="Araport" id="AT2G48010"/>
<dbReference type="TAIR" id="AT2G48010">
    <property type="gene designation" value="RKF3"/>
</dbReference>
<dbReference type="eggNOG" id="KOG1187">
    <property type="taxonomic scope" value="Eukaryota"/>
</dbReference>
<dbReference type="HOGENOM" id="CLU_000288_0_0_1"/>
<dbReference type="InParanoid" id="P93050"/>
<dbReference type="OMA" id="CMDITTR"/>
<dbReference type="OrthoDB" id="780646at2759"/>
<dbReference type="PhylomeDB" id="P93050"/>
<dbReference type="PRO" id="PR:P93050"/>
<dbReference type="Proteomes" id="UP000006548">
    <property type="component" value="Chromosome 2"/>
</dbReference>
<dbReference type="ExpressionAtlas" id="P93050">
    <property type="expression patterns" value="baseline and differential"/>
</dbReference>
<dbReference type="GO" id="GO:0005886">
    <property type="term" value="C:plasma membrane"/>
    <property type="evidence" value="ECO:0007005"/>
    <property type="project" value="TAIR"/>
</dbReference>
<dbReference type="GO" id="GO:0005524">
    <property type="term" value="F:ATP binding"/>
    <property type="evidence" value="ECO:0007669"/>
    <property type="project" value="UniProtKB-KW"/>
</dbReference>
<dbReference type="GO" id="GO:0106310">
    <property type="term" value="F:protein serine kinase activity"/>
    <property type="evidence" value="ECO:0007669"/>
    <property type="project" value="RHEA"/>
</dbReference>
<dbReference type="GO" id="GO:0004674">
    <property type="term" value="F:protein serine/threonine kinase activity"/>
    <property type="evidence" value="ECO:0007669"/>
    <property type="project" value="UniProtKB-KW"/>
</dbReference>
<dbReference type="CDD" id="cd14066">
    <property type="entry name" value="STKc_IRAK"/>
    <property type="match status" value="1"/>
</dbReference>
<dbReference type="FunFam" id="1.10.510.10:FF:000287">
    <property type="entry name" value="probable LRR receptor-like serine/threonine-protein kinase RKF3"/>
    <property type="match status" value="1"/>
</dbReference>
<dbReference type="FunFam" id="3.30.200.20:FF:000390">
    <property type="entry name" value="probable LRR receptor-like serine/threonine-protein kinase RKF3"/>
    <property type="match status" value="1"/>
</dbReference>
<dbReference type="Gene3D" id="3.30.200.20">
    <property type="entry name" value="Phosphorylase Kinase, domain 1"/>
    <property type="match status" value="1"/>
</dbReference>
<dbReference type="Gene3D" id="1.10.510.10">
    <property type="entry name" value="Transferase(Phosphotransferase) domain 1"/>
    <property type="match status" value="1"/>
</dbReference>
<dbReference type="InterPro" id="IPR011009">
    <property type="entry name" value="Kinase-like_dom_sf"/>
</dbReference>
<dbReference type="InterPro" id="IPR000719">
    <property type="entry name" value="Prot_kinase_dom"/>
</dbReference>
<dbReference type="InterPro" id="IPR017441">
    <property type="entry name" value="Protein_kinase_ATP_BS"/>
</dbReference>
<dbReference type="InterPro" id="IPR001245">
    <property type="entry name" value="Ser-Thr/Tyr_kinase_cat_dom"/>
</dbReference>
<dbReference type="InterPro" id="IPR008271">
    <property type="entry name" value="Ser/Thr_kinase_AS"/>
</dbReference>
<dbReference type="InterPro" id="IPR043891">
    <property type="entry name" value="SPARK"/>
</dbReference>
<dbReference type="PANTHER" id="PTHR47989">
    <property type="entry name" value="OS01G0750732 PROTEIN"/>
    <property type="match status" value="1"/>
</dbReference>
<dbReference type="PANTHER" id="PTHR47989:SF62">
    <property type="entry name" value="OS05G0423500 PROTEIN"/>
    <property type="match status" value="1"/>
</dbReference>
<dbReference type="Pfam" id="PF07714">
    <property type="entry name" value="PK_Tyr_Ser-Thr"/>
    <property type="match status" value="1"/>
</dbReference>
<dbReference type="Pfam" id="PF19160">
    <property type="entry name" value="SPARK"/>
    <property type="match status" value="1"/>
</dbReference>
<dbReference type="SMART" id="SM00220">
    <property type="entry name" value="S_TKc"/>
    <property type="match status" value="1"/>
</dbReference>
<dbReference type="SUPFAM" id="SSF56112">
    <property type="entry name" value="Protein kinase-like (PK-like)"/>
    <property type="match status" value="1"/>
</dbReference>
<dbReference type="PROSITE" id="PS00107">
    <property type="entry name" value="PROTEIN_KINASE_ATP"/>
    <property type="match status" value="1"/>
</dbReference>
<dbReference type="PROSITE" id="PS50011">
    <property type="entry name" value="PROTEIN_KINASE_DOM"/>
    <property type="match status" value="1"/>
</dbReference>
<dbReference type="PROSITE" id="PS00108">
    <property type="entry name" value="PROTEIN_KINASE_ST"/>
    <property type="match status" value="1"/>
</dbReference>
<gene>
    <name type="primary">RKF3</name>
    <name type="synonym">AT2324</name>
    <name type="ordered locus">At2g48010</name>
    <name type="ORF">T9J23.16</name>
</gene>
<feature type="signal peptide" evidence="1">
    <location>
        <begin position="1"/>
        <end position="20"/>
    </location>
</feature>
<feature type="chain" id="PRO_0000387520" description="Probable LRR receptor-like serine/threonine-protein kinase RKF3">
    <location>
        <begin position="21"/>
        <end position="617"/>
    </location>
</feature>
<feature type="topological domain" description="Extracellular" evidence="1">
    <location>
        <begin position="21"/>
        <end position="212"/>
    </location>
</feature>
<feature type="transmembrane region" description="Helical" evidence="1">
    <location>
        <begin position="213"/>
        <end position="233"/>
    </location>
</feature>
<feature type="topological domain" description="Cytoplasmic" evidence="1">
    <location>
        <begin position="234"/>
        <end position="617"/>
    </location>
</feature>
<feature type="domain" description="Protein kinase" evidence="2">
    <location>
        <begin position="283"/>
        <end position="563"/>
    </location>
</feature>
<feature type="region of interest" description="Disordered" evidence="4">
    <location>
        <begin position="585"/>
        <end position="617"/>
    </location>
</feature>
<feature type="active site" description="Proton acceptor" evidence="2 3">
    <location>
        <position position="412"/>
    </location>
</feature>
<feature type="binding site" evidence="2">
    <location>
        <begin position="289"/>
        <end position="297"/>
    </location>
    <ligand>
        <name>ATP</name>
        <dbReference type="ChEBI" id="CHEBI:30616"/>
    </ligand>
</feature>
<feature type="binding site" evidence="2">
    <location>
        <position position="311"/>
    </location>
    <ligand>
        <name>ATP</name>
        <dbReference type="ChEBI" id="CHEBI:30616"/>
    </ligand>
</feature>
<feature type="glycosylation site" description="N-linked (GlcNAc...) asparagine" evidence="1">
    <location>
        <position position="22"/>
    </location>
</feature>
<feature type="glycosylation site" description="N-linked (GlcNAc...) asparagine" evidence="1">
    <location>
        <position position="124"/>
    </location>
</feature>
<feature type="glycosylation site" description="N-linked (GlcNAc...) asparagine" evidence="1">
    <location>
        <position position="135"/>
    </location>
</feature>
<feature type="glycosylation site" description="N-linked (GlcNAc...) asparagine" evidence="1">
    <location>
        <position position="165"/>
    </location>
</feature>
<name>RKF3_ARATH</name>
<protein>
    <recommendedName>
        <fullName>Probable LRR receptor-like serine/threonine-protein kinase RKF3</fullName>
        <ecNumber>2.7.11.1</ecNumber>
    </recommendedName>
    <alternativeName>
        <fullName>Receptor-like kinase in flowers 3</fullName>
    </alternativeName>
</protein>
<keyword id="KW-0067">ATP-binding</keyword>
<keyword id="KW-1003">Cell membrane</keyword>
<keyword id="KW-0325">Glycoprotein</keyword>
<keyword id="KW-0418">Kinase</keyword>
<keyword id="KW-0472">Membrane</keyword>
<keyword id="KW-0547">Nucleotide-binding</keyword>
<keyword id="KW-0675">Receptor</keyword>
<keyword id="KW-1185">Reference proteome</keyword>
<keyword id="KW-0723">Serine/threonine-protein kinase</keyword>
<keyword id="KW-0732">Signal</keyword>
<keyword id="KW-0808">Transferase</keyword>
<keyword id="KW-0812">Transmembrane</keyword>
<keyword id="KW-1133">Transmembrane helix</keyword>
<reference key="1">
    <citation type="journal article" date="1998" name="Plant Mol. Biol.">
        <title>Analysis of T-DNA-mediated translational beta-glucuronidase gene fusions.</title>
        <authorList>
            <person name="Kertbundit S."/>
            <person name="Linacero R."/>
            <person name="Rouze P."/>
            <person name="Galis I."/>
            <person name="Macas J."/>
            <person name="Deboeck F."/>
            <person name="Renckens S."/>
            <person name="Hernalsteens J.-P."/>
            <person name="de Greve H."/>
        </authorList>
    </citation>
    <scope>NUCLEOTIDE SEQUENCE [GENOMIC DNA]</scope>
    <scope>TISSUE SPECIFICITY</scope>
    <source>
        <strain>cv. C24</strain>
    </source>
</reference>
<reference key="2">
    <citation type="journal article" date="1998" name="Plant Mol. Biol.">
        <title>Identification by PCR of receptor-like protein kinases from Arabidopsis flowers.</title>
        <authorList>
            <person name="Takahashi T."/>
            <person name="Mu J.-H."/>
            <person name="Gasch A."/>
            <person name="Chua N.-H."/>
        </authorList>
    </citation>
    <scope>NUCLEOTIDE SEQUENCE [MRNA]</scope>
    <scope>TISSUE SPECIFICITY</scope>
    <source>
        <strain>cv. Columbia</strain>
    </source>
</reference>
<reference key="3">
    <citation type="journal article" date="1999" name="Nature">
        <title>Sequence and analysis of chromosome 2 of the plant Arabidopsis thaliana.</title>
        <authorList>
            <person name="Lin X."/>
            <person name="Kaul S."/>
            <person name="Rounsley S.D."/>
            <person name="Shea T.P."/>
            <person name="Benito M.-I."/>
            <person name="Town C.D."/>
            <person name="Fujii C.Y."/>
            <person name="Mason T.M."/>
            <person name="Bowman C.L."/>
            <person name="Barnstead M.E."/>
            <person name="Feldblyum T.V."/>
            <person name="Buell C.R."/>
            <person name="Ketchum K.A."/>
            <person name="Lee J.J."/>
            <person name="Ronning C.M."/>
            <person name="Koo H.L."/>
            <person name="Moffat K.S."/>
            <person name="Cronin L.A."/>
            <person name="Shen M."/>
            <person name="Pai G."/>
            <person name="Van Aken S."/>
            <person name="Umayam L."/>
            <person name="Tallon L.J."/>
            <person name="Gill J.E."/>
            <person name="Adams M.D."/>
            <person name="Carrera A.J."/>
            <person name="Creasy T.H."/>
            <person name="Goodman H.M."/>
            <person name="Somerville C.R."/>
            <person name="Copenhaver G.P."/>
            <person name="Preuss D."/>
            <person name="Nierman W.C."/>
            <person name="White O."/>
            <person name="Eisen J.A."/>
            <person name="Salzberg S.L."/>
            <person name="Fraser C.M."/>
            <person name="Venter J.C."/>
        </authorList>
    </citation>
    <scope>NUCLEOTIDE SEQUENCE [LARGE SCALE GENOMIC DNA]</scope>
    <source>
        <strain>cv. Columbia</strain>
    </source>
</reference>
<reference key="4">
    <citation type="journal article" date="2017" name="Plant J.">
        <title>Araport11: a complete reannotation of the Arabidopsis thaliana reference genome.</title>
        <authorList>
            <person name="Cheng C.Y."/>
            <person name="Krishnakumar V."/>
            <person name="Chan A.P."/>
            <person name="Thibaud-Nissen F."/>
            <person name="Schobel S."/>
            <person name="Town C.D."/>
        </authorList>
    </citation>
    <scope>GENOME REANNOTATION</scope>
    <source>
        <strain>cv. Columbia</strain>
    </source>
</reference>
<reference key="5">
    <citation type="journal article" date="2003" name="Science">
        <title>Empirical analysis of transcriptional activity in the Arabidopsis genome.</title>
        <authorList>
            <person name="Yamada K."/>
            <person name="Lim J."/>
            <person name="Dale J.M."/>
            <person name="Chen H."/>
            <person name="Shinn P."/>
            <person name="Palm C.J."/>
            <person name="Southwick A.M."/>
            <person name="Wu H.C."/>
            <person name="Kim C.J."/>
            <person name="Nguyen M."/>
            <person name="Pham P.K."/>
            <person name="Cheuk R.F."/>
            <person name="Karlin-Newmann G."/>
            <person name="Liu S.X."/>
            <person name="Lam B."/>
            <person name="Sakano H."/>
            <person name="Wu T."/>
            <person name="Yu G."/>
            <person name="Miranda M."/>
            <person name="Quach H.L."/>
            <person name="Tripp M."/>
            <person name="Chang C.H."/>
            <person name="Lee J.M."/>
            <person name="Toriumi M.J."/>
            <person name="Chan M.M."/>
            <person name="Tang C.C."/>
            <person name="Onodera C.S."/>
            <person name="Deng J.M."/>
            <person name="Akiyama K."/>
            <person name="Ansari Y."/>
            <person name="Arakawa T."/>
            <person name="Banh J."/>
            <person name="Banno F."/>
            <person name="Bowser L."/>
            <person name="Brooks S.Y."/>
            <person name="Carninci P."/>
            <person name="Chao Q."/>
            <person name="Choy N."/>
            <person name="Enju A."/>
            <person name="Goldsmith A.D."/>
            <person name="Gurjal M."/>
            <person name="Hansen N.F."/>
            <person name="Hayashizaki Y."/>
            <person name="Johnson-Hopson C."/>
            <person name="Hsuan V.W."/>
            <person name="Iida K."/>
            <person name="Karnes M."/>
            <person name="Khan S."/>
            <person name="Koesema E."/>
            <person name="Ishida J."/>
            <person name="Jiang P.X."/>
            <person name="Jones T."/>
            <person name="Kawai J."/>
            <person name="Kamiya A."/>
            <person name="Meyers C."/>
            <person name="Nakajima M."/>
            <person name="Narusaka M."/>
            <person name="Seki M."/>
            <person name="Sakurai T."/>
            <person name="Satou M."/>
            <person name="Tamse R."/>
            <person name="Vaysberg M."/>
            <person name="Wallender E.K."/>
            <person name="Wong C."/>
            <person name="Yamamura Y."/>
            <person name="Yuan S."/>
            <person name="Shinozaki K."/>
            <person name="Davis R.W."/>
            <person name="Theologis A."/>
            <person name="Ecker J.R."/>
        </authorList>
    </citation>
    <scope>NUCLEOTIDE SEQUENCE [LARGE SCALE MRNA]</scope>
    <source>
        <strain>cv. Columbia</strain>
    </source>
</reference>
<reference key="6">
    <citation type="journal article" date="2004" name="Plant Cell">
        <title>Phosphoproteomics of the Arabidopsis plasma membrane and a new phosphorylation site database.</title>
        <authorList>
            <person name="Nuehse T.S."/>
            <person name="Stensballe A."/>
            <person name="Jensen O.N."/>
            <person name="Peck S.C."/>
        </authorList>
    </citation>
    <scope>SUBCELLULAR LOCATION</scope>
</reference>
<evidence type="ECO:0000255" key="1"/>
<evidence type="ECO:0000255" key="2">
    <source>
        <dbReference type="PROSITE-ProRule" id="PRU00159"/>
    </source>
</evidence>
<evidence type="ECO:0000255" key="3">
    <source>
        <dbReference type="PROSITE-ProRule" id="PRU10027"/>
    </source>
</evidence>
<evidence type="ECO:0000256" key="4">
    <source>
        <dbReference type="SAM" id="MobiDB-lite"/>
    </source>
</evidence>
<evidence type="ECO:0000269" key="5">
    <source>
    </source>
</evidence>
<evidence type="ECO:0000269" key="6">
    <source>
    </source>
</evidence>
<evidence type="ECO:0000269" key="7">
    <source>
    </source>
</evidence>
<sequence>MLFLRRIAVVFFVFTSFSAAQNSTCPLDFSVLEPFRRPKPDGATTCQYLLQGLRLLYSHHLRQTGSFLPPPESAASCWAALQSSVAGFLPRFDVRSTCGFQTPWISQGCMDITTRSQFESLIPNSSLATTAMRCNTSLESNTPCASCTQSLSAFQPYLSGPSLGNVSDCASFPSIYAAAFANSLGPTDKGTAKCLFQLDLASPTSSGANKVKVLVSSFSVLLVASVLVITAWFWYCRRKKSKLLKPRDTSLEAGTQSRLDSMSESTTLVKFSFDEIKKATNNFSRHNIIGRGGYGNVFKGALPDGTQVAFKRFKNCSAGGDANFAHEVEVIASIRHVNLLALRGYCTATTPYEGHQRIIVCDLVSNGSLHDHLFGDLEAQLAWPLRQRIALGMARGLAYLHYGAQPSIIHRDIKASNILLDERFEAKVADFGLAKFNPEGMTHMSTRVAGTMGYVAPEYALYGQLTEKSDVYSFGVVLLELLSRRKAIVTDEEGQPVSVADWAWSLVREGQTLDVVEDGMPEKGPPEVLEKYVLIAVLCSHPQLHARPTMDQVVKMLESNEFTVIAIPQRPIPLVACREEIDRSVSSSSGSGKLTSPTGYQAFSFGGDGPSGNTNTT</sequence>
<proteinExistence type="evidence at transcript level"/>
<accession>P93050</accession>